<evidence type="ECO:0000255" key="1">
    <source>
        <dbReference type="HAMAP-Rule" id="MF_01847"/>
    </source>
</evidence>
<dbReference type="EC" id="3.6.1.-" evidence="1"/>
<dbReference type="EMBL" id="CP000026">
    <property type="protein sequence ID" value="AAV78150.1"/>
    <property type="molecule type" value="Genomic_DNA"/>
</dbReference>
<dbReference type="RefSeq" id="WP_000113030.1">
    <property type="nucleotide sequence ID" value="NC_006511.1"/>
</dbReference>
<dbReference type="SMR" id="Q5PFM4"/>
<dbReference type="KEGG" id="spt:SPA2265"/>
<dbReference type="HOGENOM" id="CLU_044146_5_2_6"/>
<dbReference type="Proteomes" id="UP000008185">
    <property type="component" value="Chromosome"/>
</dbReference>
<dbReference type="GO" id="GO:0002145">
    <property type="term" value="F:4-amino-5-hydroxymethyl-2-methylpyrimidine diphosphatase activity"/>
    <property type="evidence" value="ECO:0007669"/>
    <property type="project" value="RHEA"/>
</dbReference>
<dbReference type="GO" id="GO:0000287">
    <property type="term" value="F:magnesium ion binding"/>
    <property type="evidence" value="ECO:0000250"/>
    <property type="project" value="UniProtKB"/>
</dbReference>
<dbReference type="GO" id="GO:0016791">
    <property type="term" value="F:phosphatase activity"/>
    <property type="evidence" value="ECO:0000250"/>
    <property type="project" value="UniProtKB"/>
</dbReference>
<dbReference type="CDD" id="cd07516">
    <property type="entry name" value="HAD_Pase"/>
    <property type="match status" value="1"/>
</dbReference>
<dbReference type="FunFam" id="3.30.1240.10:FF:000002">
    <property type="entry name" value="HMP-PP phosphatase"/>
    <property type="match status" value="1"/>
</dbReference>
<dbReference type="Gene3D" id="3.30.1240.10">
    <property type="match status" value="1"/>
</dbReference>
<dbReference type="Gene3D" id="3.40.50.1000">
    <property type="entry name" value="HAD superfamily/HAD-like"/>
    <property type="match status" value="1"/>
</dbReference>
<dbReference type="HAMAP" id="MF_01847">
    <property type="entry name" value="HMP_PP_phosphat"/>
    <property type="match status" value="1"/>
</dbReference>
<dbReference type="InterPro" id="IPR000150">
    <property type="entry name" value="Cof"/>
</dbReference>
<dbReference type="InterPro" id="IPR036412">
    <property type="entry name" value="HAD-like_sf"/>
</dbReference>
<dbReference type="InterPro" id="IPR006379">
    <property type="entry name" value="HAD-SF_hydro_IIB"/>
</dbReference>
<dbReference type="InterPro" id="IPR023214">
    <property type="entry name" value="HAD_sf"/>
</dbReference>
<dbReference type="InterPro" id="IPR023938">
    <property type="entry name" value="HMP-PP_phosphatase"/>
</dbReference>
<dbReference type="NCBIfam" id="TIGR00099">
    <property type="entry name" value="Cof-subfamily"/>
    <property type="match status" value="1"/>
</dbReference>
<dbReference type="NCBIfam" id="TIGR01484">
    <property type="entry name" value="HAD-SF-IIB"/>
    <property type="match status" value="1"/>
</dbReference>
<dbReference type="NCBIfam" id="NF011705">
    <property type="entry name" value="PRK15126.1"/>
    <property type="match status" value="1"/>
</dbReference>
<dbReference type="PANTHER" id="PTHR47267">
    <property type="match status" value="1"/>
</dbReference>
<dbReference type="PANTHER" id="PTHR47267:SF2">
    <property type="entry name" value="HMP-PP PHOSPHATASE"/>
    <property type="match status" value="1"/>
</dbReference>
<dbReference type="Pfam" id="PF08282">
    <property type="entry name" value="Hydrolase_3"/>
    <property type="match status" value="1"/>
</dbReference>
<dbReference type="SFLD" id="SFLDG01140">
    <property type="entry name" value="C2.B:_Phosphomannomutase_and_P"/>
    <property type="match status" value="1"/>
</dbReference>
<dbReference type="SFLD" id="SFLDS00003">
    <property type="entry name" value="Haloacid_Dehalogenase"/>
    <property type="match status" value="1"/>
</dbReference>
<dbReference type="SUPFAM" id="SSF56784">
    <property type="entry name" value="HAD-like"/>
    <property type="match status" value="1"/>
</dbReference>
<dbReference type="PROSITE" id="PS01228">
    <property type="entry name" value="COF_1"/>
    <property type="match status" value="1"/>
</dbReference>
<dbReference type="PROSITE" id="PS01229">
    <property type="entry name" value="COF_2"/>
    <property type="match status" value="1"/>
</dbReference>
<sequence>MARLAAFDMDGTLLMPDHHLGRETIATLARLRERDITLTFATGRHVLEMRHILGTLSLDAYLITGNGTRIHSLEGDVLHRQDLDPQVADTVMHHAWDTRASMHVFNDNGWFTGQEIPALLQAHVYSGFRYQVIDIKSIPAHQVTKICFCGDHDDLIRLRIQLNEALEERAHLCFSAVDCLEVLPLGCNKGSALAVLSNHLGLSLADCMAFGDAMNDREMLGSVGRGLIMGNAMPQLIAALPHLSVIGHCGNQAVSHFLTHWLDNPHLPYSPE</sequence>
<keyword id="KW-0378">Hydrolase</keyword>
<keyword id="KW-0460">Magnesium</keyword>
<keyword id="KW-0479">Metal-binding</keyword>
<feature type="chain" id="PRO_0000342990" description="HMP-PP phosphatase">
    <location>
        <begin position="1"/>
        <end position="272"/>
    </location>
</feature>
<feature type="active site" description="Nucleophile" evidence="1">
    <location>
        <position position="8"/>
    </location>
</feature>
<feature type="binding site" evidence="1">
    <location>
        <position position="8"/>
    </location>
    <ligand>
        <name>Mg(2+)</name>
        <dbReference type="ChEBI" id="CHEBI:18420"/>
    </ligand>
</feature>
<feature type="binding site" evidence="1">
    <location>
        <position position="10"/>
    </location>
    <ligand>
        <name>Mg(2+)</name>
        <dbReference type="ChEBI" id="CHEBI:18420"/>
    </ligand>
</feature>
<feature type="binding site" evidence="1">
    <location>
        <position position="212"/>
    </location>
    <ligand>
        <name>Mg(2+)</name>
        <dbReference type="ChEBI" id="CHEBI:18420"/>
    </ligand>
</feature>
<protein>
    <recommendedName>
        <fullName evidence="1">HMP-PP phosphatase</fullName>
        <ecNumber evidence="1">3.6.1.-</ecNumber>
    </recommendedName>
</protein>
<accession>Q5PFM4</accession>
<reference key="1">
    <citation type="journal article" date="2004" name="Nat. Genet.">
        <title>Comparison of genome degradation in Paratyphi A and Typhi, human-restricted serovars of Salmonella enterica that cause typhoid.</title>
        <authorList>
            <person name="McClelland M."/>
            <person name="Sanderson K.E."/>
            <person name="Clifton S.W."/>
            <person name="Latreille P."/>
            <person name="Porwollik S."/>
            <person name="Sabo A."/>
            <person name="Meyer R."/>
            <person name="Bieri T."/>
            <person name="Ozersky P."/>
            <person name="McLellan M."/>
            <person name="Harkins C.R."/>
            <person name="Wang C."/>
            <person name="Nguyen C."/>
            <person name="Berghoff A."/>
            <person name="Elliott G."/>
            <person name="Kohlberg S."/>
            <person name="Strong C."/>
            <person name="Du F."/>
            <person name="Carter J."/>
            <person name="Kremizki C."/>
            <person name="Layman D."/>
            <person name="Leonard S."/>
            <person name="Sun H."/>
            <person name="Fulton L."/>
            <person name="Nash W."/>
            <person name="Miner T."/>
            <person name="Minx P."/>
            <person name="Delehaunty K."/>
            <person name="Fronick C."/>
            <person name="Magrini V."/>
            <person name="Nhan M."/>
            <person name="Warren W."/>
            <person name="Florea L."/>
            <person name="Spieth J."/>
            <person name="Wilson R.K."/>
        </authorList>
    </citation>
    <scope>NUCLEOTIDE SEQUENCE [LARGE SCALE GENOMIC DNA]</scope>
    <source>
        <strain>ATCC 9150 / SARB42</strain>
    </source>
</reference>
<name>COF_SALPA</name>
<organism>
    <name type="scientific">Salmonella paratyphi A (strain ATCC 9150 / SARB42)</name>
    <dbReference type="NCBI Taxonomy" id="295319"/>
    <lineage>
        <taxon>Bacteria</taxon>
        <taxon>Pseudomonadati</taxon>
        <taxon>Pseudomonadota</taxon>
        <taxon>Gammaproteobacteria</taxon>
        <taxon>Enterobacterales</taxon>
        <taxon>Enterobacteriaceae</taxon>
        <taxon>Salmonella</taxon>
    </lineage>
</organism>
<proteinExistence type="inferred from homology"/>
<comment type="function">
    <text evidence="1">Catalyzes the hydrolysis of 4-amino-2-methyl-5-hydroxymethylpyrimidine pyrophosphate (HMP-PP) to 4-amino-2-methyl-5-hydroxymethylpyrimidine phosphate (HMP-P).</text>
</comment>
<comment type="catalytic activity">
    <reaction evidence="1">
        <text>4-amino-2-methyl-5-(diphosphooxymethyl)pyrimidine + H2O = 4-amino-2-methyl-5-(phosphooxymethyl)pyrimidine + phosphate + H(+)</text>
        <dbReference type="Rhea" id="RHEA:27914"/>
        <dbReference type="ChEBI" id="CHEBI:15377"/>
        <dbReference type="ChEBI" id="CHEBI:15378"/>
        <dbReference type="ChEBI" id="CHEBI:43474"/>
        <dbReference type="ChEBI" id="CHEBI:57841"/>
        <dbReference type="ChEBI" id="CHEBI:58354"/>
    </reaction>
</comment>
<comment type="cofactor">
    <cofactor evidence="1">
        <name>Mg(2+)</name>
        <dbReference type="ChEBI" id="CHEBI:18420"/>
    </cofactor>
</comment>
<comment type="similarity">
    <text evidence="1">Belongs to the HAD-like hydrolase superfamily. Cof family.</text>
</comment>
<gene>
    <name evidence="1" type="primary">cof</name>
    <name type="ordered locus">SPA2265</name>
</gene>